<proteinExistence type="inferred from homology"/>
<comment type="function">
    <text evidence="1">Catalyzes the transfer of acetyl from acetyl-CoA to desacetylmycothiol (Cys-GlcN-Ins) to form mycothiol.</text>
</comment>
<comment type="catalytic activity">
    <reaction evidence="1">
        <text>1D-myo-inositol 2-(L-cysteinylamino)-2-deoxy-alpha-D-glucopyranoside + acetyl-CoA = mycothiol + CoA + H(+)</text>
        <dbReference type="Rhea" id="RHEA:26172"/>
        <dbReference type="ChEBI" id="CHEBI:15378"/>
        <dbReference type="ChEBI" id="CHEBI:16768"/>
        <dbReference type="ChEBI" id="CHEBI:57287"/>
        <dbReference type="ChEBI" id="CHEBI:57288"/>
        <dbReference type="ChEBI" id="CHEBI:58887"/>
        <dbReference type="EC" id="2.3.1.189"/>
    </reaction>
</comment>
<comment type="subunit">
    <text evidence="1">Monomer.</text>
</comment>
<comment type="similarity">
    <text evidence="1">Belongs to the acetyltransferase family. MshD subfamily.</text>
</comment>
<keyword id="KW-0012">Acyltransferase</keyword>
<keyword id="KW-0677">Repeat</keyword>
<keyword id="KW-0808">Transferase</keyword>
<gene>
    <name evidence="1" type="primary">mshD</name>
    <name type="ordered locus">cgR_2479</name>
</gene>
<dbReference type="EC" id="2.3.1.189" evidence="1"/>
<dbReference type="EMBL" id="AP009044">
    <property type="protein sequence ID" value="BAF55490.1"/>
    <property type="molecule type" value="Genomic_DNA"/>
</dbReference>
<dbReference type="RefSeq" id="WP_011897834.1">
    <property type="nucleotide sequence ID" value="NC_009342.1"/>
</dbReference>
<dbReference type="SMR" id="A4QGX4"/>
<dbReference type="KEGG" id="cgt:cgR_2479"/>
<dbReference type="HOGENOM" id="CLU_068014_0_0_11"/>
<dbReference type="PhylomeDB" id="A4QGX4"/>
<dbReference type="Proteomes" id="UP000006698">
    <property type="component" value="Chromosome"/>
</dbReference>
<dbReference type="GO" id="GO:0035447">
    <property type="term" value="F:mycothiol synthase activity"/>
    <property type="evidence" value="ECO:0007669"/>
    <property type="project" value="UniProtKB-UniRule"/>
</dbReference>
<dbReference type="GO" id="GO:0008999">
    <property type="term" value="F:protein-N-terminal-alanine acetyltransferase activity"/>
    <property type="evidence" value="ECO:0007669"/>
    <property type="project" value="TreeGrafter"/>
</dbReference>
<dbReference type="GO" id="GO:0010125">
    <property type="term" value="P:mycothiol biosynthetic process"/>
    <property type="evidence" value="ECO:0007669"/>
    <property type="project" value="UniProtKB-UniRule"/>
</dbReference>
<dbReference type="CDD" id="cd04301">
    <property type="entry name" value="NAT_SF"/>
    <property type="match status" value="2"/>
</dbReference>
<dbReference type="Gene3D" id="3.40.630.30">
    <property type="match status" value="1"/>
</dbReference>
<dbReference type="HAMAP" id="MF_01698">
    <property type="entry name" value="MshD"/>
    <property type="match status" value="1"/>
</dbReference>
<dbReference type="InterPro" id="IPR016181">
    <property type="entry name" value="Acyl_CoA_acyltransferase"/>
</dbReference>
<dbReference type="InterPro" id="IPR000182">
    <property type="entry name" value="GNAT_dom"/>
</dbReference>
<dbReference type="InterPro" id="IPR050276">
    <property type="entry name" value="MshD_Acetyltransferase"/>
</dbReference>
<dbReference type="InterPro" id="IPR017813">
    <property type="entry name" value="Mycothiol_AcTrfase"/>
</dbReference>
<dbReference type="NCBIfam" id="TIGR03448">
    <property type="entry name" value="mycothiol_MshD"/>
    <property type="match status" value="1"/>
</dbReference>
<dbReference type="PANTHER" id="PTHR43617">
    <property type="entry name" value="L-AMINO ACID N-ACETYLTRANSFERASE"/>
    <property type="match status" value="1"/>
</dbReference>
<dbReference type="PANTHER" id="PTHR43617:SF31">
    <property type="entry name" value="MYCOTHIOL ACETYLTRANSFERASE"/>
    <property type="match status" value="1"/>
</dbReference>
<dbReference type="Pfam" id="PF00583">
    <property type="entry name" value="Acetyltransf_1"/>
    <property type="match status" value="1"/>
</dbReference>
<dbReference type="Pfam" id="PF13508">
    <property type="entry name" value="Acetyltransf_7"/>
    <property type="match status" value="1"/>
</dbReference>
<dbReference type="PIRSF" id="PIRSF021524">
    <property type="entry name" value="MSH_acetyltransferase"/>
    <property type="match status" value="1"/>
</dbReference>
<dbReference type="SUPFAM" id="SSF55729">
    <property type="entry name" value="Acyl-CoA N-acyltransferases (Nat)"/>
    <property type="match status" value="2"/>
</dbReference>
<dbReference type="PROSITE" id="PS51186">
    <property type="entry name" value="GNAT"/>
    <property type="match status" value="2"/>
</dbReference>
<organism>
    <name type="scientific">Corynebacterium glutamicum (strain R)</name>
    <dbReference type="NCBI Taxonomy" id="340322"/>
    <lineage>
        <taxon>Bacteria</taxon>
        <taxon>Bacillati</taxon>
        <taxon>Actinomycetota</taxon>
        <taxon>Actinomycetes</taxon>
        <taxon>Mycobacteriales</taxon>
        <taxon>Corynebacteriaceae</taxon>
        <taxon>Corynebacterium</taxon>
    </lineage>
</organism>
<protein>
    <recommendedName>
        <fullName evidence="1">Mycothiol acetyltransferase</fullName>
        <shortName evidence="1">MSH acetyltransferase</shortName>
        <ecNumber evidence="1">2.3.1.189</ecNumber>
    </recommendedName>
    <alternativeName>
        <fullName evidence="1">Mycothiol synthase</fullName>
    </alternativeName>
</protein>
<feature type="chain" id="PRO_0000400251" description="Mycothiol acetyltransferase">
    <location>
        <begin position="1"/>
        <end position="292"/>
    </location>
</feature>
<feature type="domain" description="N-acetyltransferase 1" evidence="1">
    <location>
        <begin position="13"/>
        <end position="168"/>
    </location>
</feature>
<feature type="domain" description="N-acetyltransferase 2" evidence="1">
    <location>
        <begin position="159"/>
        <end position="292"/>
    </location>
</feature>
<feature type="binding site" evidence="1">
    <location>
        <position position="40"/>
    </location>
    <ligand>
        <name>1D-myo-inositol 2-(L-cysteinylamino)-2-deoxy-alpha-D-glucopyranoside</name>
        <dbReference type="ChEBI" id="CHEBI:58887"/>
    </ligand>
</feature>
<feature type="binding site" evidence="1">
    <location>
        <begin position="77"/>
        <end position="79"/>
    </location>
    <ligand>
        <name>acetyl-CoA</name>
        <dbReference type="ChEBI" id="CHEBI:57288"/>
        <label>1</label>
    </ligand>
</feature>
<feature type="binding site" evidence="1">
    <location>
        <position position="179"/>
    </location>
    <ligand>
        <name>1D-myo-inositol 2-(L-cysteinylamino)-2-deoxy-alpha-D-glucopyranoside</name>
        <dbReference type="ChEBI" id="CHEBI:58887"/>
    </ligand>
</feature>
<feature type="binding site" evidence="1">
    <location>
        <position position="218"/>
    </location>
    <ligand>
        <name>1D-myo-inositol 2-(L-cysteinylamino)-2-deoxy-alpha-D-glucopyranoside</name>
        <dbReference type="ChEBI" id="CHEBI:58887"/>
    </ligand>
</feature>
<feature type="binding site" evidence="1">
    <location>
        <position position="226"/>
    </location>
    <ligand>
        <name>1D-myo-inositol 2-(L-cysteinylamino)-2-deoxy-alpha-D-glucopyranoside</name>
        <dbReference type="ChEBI" id="CHEBI:58887"/>
    </ligand>
</feature>
<feature type="binding site" evidence="1">
    <location>
        <begin position="230"/>
        <end position="232"/>
    </location>
    <ligand>
        <name>acetyl-CoA</name>
        <dbReference type="ChEBI" id="CHEBI:57288"/>
        <label>2</label>
    </ligand>
</feature>
<feature type="binding site" evidence="1">
    <location>
        <begin position="237"/>
        <end position="243"/>
    </location>
    <ligand>
        <name>acetyl-CoA</name>
        <dbReference type="ChEBI" id="CHEBI:57288"/>
        <label>2</label>
    </ligand>
</feature>
<feature type="binding site" evidence="1">
    <location>
        <position position="264"/>
    </location>
    <ligand>
        <name>1D-myo-inositol 2-(L-cysteinylamino)-2-deoxy-alpha-D-glucopyranoside</name>
        <dbReference type="ChEBI" id="CHEBI:58887"/>
    </ligand>
</feature>
<sequence length="292" mass="32138">MNTSDRIKSTQIALDRDLREQALLLLKEVRAVDGVDAFSEQFVRGLAEPGLGHSHLIVTLNDKLVGLAATDEETTELAVHPAHRRQGIGKALIDAAPTSSIWAHGNTAGAQALASTLRMKKTRELLVMEISDRALDGSAAYKDPDGITHSSLANAPVEKSVAEAKWLQSNNEAFDWHPEQGGWTTHRLAQAQKADWYKDSDVLFLWDGEEIVGFHWVKQHSPELQEIYVVGLSSAYRGRGLGDPLVRLGLHHMRAHGARKVILYVEADNTPAVAAYEKLGFTVAESHVVYEK</sequence>
<name>MSHD_CORGB</name>
<accession>A4QGX4</accession>
<evidence type="ECO:0000255" key="1">
    <source>
        <dbReference type="HAMAP-Rule" id="MF_01698"/>
    </source>
</evidence>
<reference key="1">
    <citation type="journal article" date="2007" name="Microbiology">
        <title>Comparative analysis of the Corynebacterium glutamicum group and complete genome sequence of strain R.</title>
        <authorList>
            <person name="Yukawa H."/>
            <person name="Omumasaba C.A."/>
            <person name="Nonaka H."/>
            <person name="Kos P."/>
            <person name="Okai N."/>
            <person name="Suzuki N."/>
            <person name="Suda M."/>
            <person name="Tsuge Y."/>
            <person name="Watanabe J."/>
            <person name="Ikeda Y."/>
            <person name="Vertes A.A."/>
            <person name="Inui M."/>
        </authorList>
    </citation>
    <scope>NUCLEOTIDE SEQUENCE [LARGE SCALE GENOMIC DNA]</scope>
    <source>
        <strain>R</strain>
    </source>
</reference>